<gene>
    <name evidence="1" type="primary">hisF</name>
    <name type="ordered locus">Bcep1808_0410</name>
</gene>
<protein>
    <recommendedName>
        <fullName evidence="1">Imidazole glycerol phosphate synthase subunit HisF</fullName>
        <ecNumber evidence="1">4.3.2.10</ecNumber>
    </recommendedName>
    <alternativeName>
        <fullName evidence="1">IGP synthase cyclase subunit</fullName>
    </alternativeName>
    <alternativeName>
        <fullName evidence="1">IGP synthase subunit HisF</fullName>
    </alternativeName>
    <alternativeName>
        <fullName evidence="1">ImGP synthase subunit HisF</fullName>
        <shortName evidence="1">IGPS subunit HisF</shortName>
    </alternativeName>
</protein>
<reference key="1">
    <citation type="submission" date="2007-03" db="EMBL/GenBank/DDBJ databases">
        <title>Complete sequence of chromosome 1 of Burkholderia vietnamiensis G4.</title>
        <authorList>
            <consortium name="US DOE Joint Genome Institute"/>
            <person name="Copeland A."/>
            <person name="Lucas S."/>
            <person name="Lapidus A."/>
            <person name="Barry K."/>
            <person name="Detter J.C."/>
            <person name="Glavina del Rio T."/>
            <person name="Hammon N."/>
            <person name="Israni S."/>
            <person name="Dalin E."/>
            <person name="Tice H."/>
            <person name="Pitluck S."/>
            <person name="Chain P."/>
            <person name="Malfatti S."/>
            <person name="Shin M."/>
            <person name="Vergez L."/>
            <person name="Schmutz J."/>
            <person name="Larimer F."/>
            <person name="Land M."/>
            <person name="Hauser L."/>
            <person name="Kyrpides N."/>
            <person name="Tiedje J."/>
            <person name="Richardson P."/>
        </authorList>
    </citation>
    <scope>NUCLEOTIDE SEQUENCE [LARGE SCALE GENOMIC DNA]</scope>
    <source>
        <strain>G4 / LMG 22486</strain>
    </source>
</reference>
<comment type="function">
    <text evidence="1">IGPS catalyzes the conversion of PRFAR and glutamine to IGP, AICAR and glutamate. The HisF subunit catalyzes the cyclization activity that produces IGP and AICAR from PRFAR using the ammonia provided by the HisH subunit.</text>
</comment>
<comment type="catalytic activity">
    <reaction evidence="1">
        <text>5-[(5-phospho-1-deoxy-D-ribulos-1-ylimino)methylamino]-1-(5-phospho-beta-D-ribosyl)imidazole-4-carboxamide + L-glutamine = D-erythro-1-(imidazol-4-yl)glycerol 3-phosphate + 5-amino-1-(5-phospho-beta-D-ribosyl)imidazole-4-carboxamide + L-glutamate + H(+)</text>
        <dbReference type="Rhea" id="RHEA:24793"/>
        <dbReference type="ChEBI" id="CHEBI:15378"/>
        <dbReference type="ChEBI" id="CHEBI:29985"/>
        <dbReference type="ChEBI" id="CHEBI:58278"/>
        <dbReference type="ChEBI" id="CHEBI:58359"/>
        <dbReference type="ChEBI" id="CHEBI:58475"/>
        <dbReference type="ChEBI" id="CHEBI:58525"/>
        <dbReference type="EC" id="4.3.2.10"/>
    </reaction>
</comment>
<comment type="pathway">
    <text evidence="1">Amino-acid biosynthesis; L-histidine biosynthesis; L-histidine from 5-phospho-alpha-D-ribose 1-diphosphate: step 5/9.</text>
</comment>
<comment type="subunit">
    <text evidence="1">Heterodimer of HisH and HisF.</text>
</comment>
<comment type="subcellular location">
    <subcellularLocation>
        <location evidence="1">Cytoplasm</location>
    </subcellularLocation>
</comment>
<comment type="similarity">
    <text evidence="1">Belongs to the HisA/HisF family.</text>
</comment>
<organism>
    <name type="scientific">Burkholderia vietnamiensis (strain G4 / LMG 22486)</name>
    <name type="common">Burkholderia cepacia (strain R1808)</name>
    <dbReference type="NCBI Taxonomy" id="269482"/>
    <lineage>
        <taxon>Bacteria</taxon>
        <taxon>Pseudomonadati</taxon>
        <taxon>Pseudomonadota</taxon>
        <taxon>Betaproteobacteria</taxon>
        <taxon>Burkholderiales</taxon>
        <taxon>Burkholderiaceae</taxon>
        <taxon>Burkholderia</taxon>
        <taxon>Burkholderia cepacia complex</taxon>
    </lineage>
</organism>
<evidence type="ECO:0000255" key="1">
    <source>
        <dbReference type="HAMAP-Rule" id="MF_01013"/>
    </source>
</evidence>
<proteinExistence type="inferred from homology"/>
<sequence length="257" mass="27198">MALAKRIIPCLDVTAGRVVKGVNFVELRDAGDPVEIARRYDEQGADELTFLDITATSDQRDLILPIIEAVASQVFIPLTVGGGVRAVEDVRRLLNAGADKVSMNSSAVANPQLVRDAADKYGSQCIVVAIDAKRVSAPNEAPRWEVFTHGGRKATGLDAIEWARKMAELGAGEILLTSMDRDGTKSGFDLALTRAVSDAVPVPVIASGGVGCLQDLADGIKQGHADAVLAASIFHYGEHTVGEAKHFMADQGIAVRL</sequence>
<feature type="chain" id="PRO_1000063037" description="Imidazole glycerol phosphate synthase subunit HisF">
    <location>
        <begin position="1"/>
        <end position="257"/>
    </location>
</feature>
<feature type="active site" evidence="1">
    <location>
        <position position="12"/>
    </location>
</feature>
<feature type="active site" evidence="1">
    <location>
        <position position="131"/>
    </location>
</feature>
<dbReference type="EC" id="4.3.2.10" evidence="1"/>
<dbReference type="EMBL" id="CP000614">
    <property type="protein sequence ID" value="ABO53422.1"/>
    <property type="molecule type" value="Genomic_DNA"/>
</dbReference>
<dbReference type="SMR" id="A4JAW9"/>
<dbReference type="KEGG" id="bvi:Bcep1808_0410"/>
<dbReference type="eggNOG" id="COG0107">
    <property type="taxonomic scope" value="Bacteria"/>
</dbReference>
<dbReference type="HOGENOM" id="CLU_048577_4_0_4"/>
<dbReference type="UniPathway" id="UPA00031">
    <property type="reaction ID" value="UER00010"/>
</dbReference>
<dbReference type="Proteomes" id="UP000002287">
    <property type="component" value="Chromosome 1"/>
</dbReference>
<dbReference type="GO" id="GO:0005737">
    <property type="term" value="C:cytoplasm"/>
    <property type="evidence" value="ECO:0007669"/>
    <property type="project" value="UniProtKB-SubCell"/>
</dbReference>
<dbReference type="GO" id="GO:0000107">
    <property type="term" value="F:imidazoleglycerol-phosphate synthase activity"/>
    <property type="evidence" value="ECO:0007669"/>
    <property type="project" value="UniProtKB-UniRule"/>
</dbReference>
<dbReference type="GO" id="GO:0016829">
    <property type="term" value="F:lyase activity"/>
    <property type="evidence" value="ECO:0007669"/>
    <property type="project" value="UniProtKB-KW"/>
</dbReference>
<dbReference type="GO" id="GO:0000105">
    <property type="term" value="P:L-histidine biosynthetic process"/>
    <property type="evidence" value="ECO:0007669"/>
    <property type="project" value="UniProtKB-UniRule"/>
</dbReference>
<dbReference type="CDD" id="cd04731">
    <property type="entry name" value="HisF"/>
    <property type="match status" value="1"/>
</dbReference>
<dbReference type="FunFam" id="3.20.20.70:FF:000006">
    <property type="entry name" value="Imidazole glycerol phosphate synthase subunit HisF"/>
    <property type="match status" value="1"/>
</dbReference>
<dbReference type="Gene3D" id="3.20.20.70">
    <property type="entry name" value="Aldolase class I"/>
    <property type="match status" value="1"/>
</dbReference>
<dbReference type="HAMAP" id="MF_01013">
    <property type="entry name" value="HisF"/>
    <property type="match status" value="1"/>
</dbReference>
<dbReference type="InterPro" id="IPR013785">
    <property type="entry name" value="Aldolase_TIM"/>
</dbReference>
<dbReference type="InterPro" id="IPR006062">
    <property type="entry name" value="His_biosynth"/>
</dbReference>
<dbReference type="InterPro" id="IPR004651">
    <property type="entry name" value="HisF"/>
</dbReference>
<dbReference type="InterPro" id="IPR050064">
    <property type="entry name" value="IGPS_HisA/HisF"/>
</dbReference>
<dbReference type="InterPro" id="IPR011060">
    <property type="entry name" value="RibuloseP-bd_barrel"/>
</dbReference>
<dbReference type="NCBIfam" id="TIGR00735">
    <property type="entry name" value="hisF"/>
    <property type="match status" value="1"/>
</dbReference>
<dbReference type="PANTHER" id="PTHR21235:SF2">
    <property type="entry name" value="IMIDAZOLE GLYCEROL PHOSPHATE SYNTHASE HISHF"/>
    <property type="match status" value="1"/>
</dbReference>
<dbReference type="PANTHER" id="PTHR21235">
    <property type="entry name" value="IMIDAZOLE GLYCEROL PHOSPHATE SYNTHASE SUBUNIT HISF/H IGP SYNTHASE SUBUNIT HISF/H"/>
    <property type="match status" value="1"/>
</dbReference>
<dbReference type="Pfam" id="PF00977">
    <property type="entry name" value="His_biosynth"/>
    <property type="match status" value="1"/>
</dbReference>
<dbReference type="SUPFAM" id="SSF51366">
    <property type="entry name" value="Ribulose-phoshate binding barrel"/>
    <property type="match status" value="1"/>
</dbReference>
<keyword id="KW-0028">Amino-acid biosynthesis</keyword>
<keyword id="KW-0963">Cytoplasm</keyword>
<keyword id="KW-0368">Histidine biosynthesis</keyword>
<keyword id="KW-0456">Lyase</keyword>
<name>HIS6_BURVG</name>
<accession>A4JAW9</accession>